<feature type="chain" id="PRO_0000084838" description="Fosmidomycin resistance protein">
    <location>
        <begin position="1"/>
        <end position="406"/>
    </location>
</feature>
<feature type="topological domain" description="Periplasmic" evidence="1">
    <location>
        <begin position="1"/>
        <end position="42"/>
    </location>
</feature>
<feature type="transmembrane region" description="Helical" evidence="1">
    <location>
        <begin position="43"/>
        <end position="63"/>
    </location>
</feature>
<feature type="transmembrane region" description="Helical" evidence="1">
    <location>
        <begin position="64"/>
        <end position="84"/>
    </location>
</feature>
<feature type="topological domain" description="Periplasmic" evidence="1">
    <location>
        <begin position="85"/>
        <end position="102"/>
    </location>
</feature>
<feature type="transmembrane region" description="Helical" evidence="1">
    <location>
        <begin position="103"/>
        <end position="123"/>
    </location>
</feature>
<feature type="topological domain" description="Cytoplasmic" evidence="1">
    <location>
        <begin position="124"/>
        <end position="151"/>
    </location>
</feature>
<feature type="transmembrane region" description="Helical" evidence="1">
    <location>
        <begin position="152"/>
        <end position="172"/>
    </location>
</feature>
<feature type="topological domain" description="Periplasmic" evidence="1">
    <location>
        <begin position="173"/>
        <end position="177"/>
    </location>
</feature>
<feature type="transmembrane region" description="Helical" evidence="1">
    <location>
        <begin position="178"/>
        <end position="198"/>
    </location>
</feature>
<feature type="topological domain" description="Cytoplasmic" evidence="1">
    <location>
        <begin position="199"/>
        <end position="225"/>
    </location>
</feature>
<feature type="transmembrane region" description="Helical" evidence="1">
    <location>
        <begin position="226"/>
        <end position="246"/>
    </location>
</feature>
<feature type="topological domain" description="Periplasmic" evidence="1">
    <location>
        <begin position="247"/>
        <end position="266"/>
    </location>
</feature>
<feature type="transmembrane region" description="Helical" evidence="1">
    <location>
        <begin position="267"/>
        <end position="287"/>
    </location>
</feature>
<feature type="topological domain" description="Cytoplasmic" evidence="1">
    <location>
        <begin position="288"/>
        <end position="294"/>
    </location>
</feature>
<feature type="transmembrane region" description="Helical" evidence="1">
    <location>
        <begin position="295"/>
        <end position="315"/>
    </location>
</feature>
<feature type="topological domain" description="Periplasmic" evidence="1">
    <location>
        <begin position="316"/>
        <end position="319"/>
    </location>
</feature>
<feature type="transmembrane region" description="Helical" evidence="1">
    <location>
        <begin position="320"/>
        <end position="340"/>
    </location>
</feature>
<feature type="topological domain" description="Cytoplasmic" evidence="1">
    <location>
        <begin position="341"/>
        <end position="353"/>
    </location>
</feature>
<feature type="transmembrane region" description="Helical" evidence="1">
    <location>
        <begin position="354"/>
        <end position="374"/>
    </location>
</feature>
<feature type="topological domain" description="Periplasmic" evidence="1">
    <location>
        <begin position="375"/>
        <end position="378"/>
    </location>
</feature>
<feature type="transmembrane region" description="Helical" evidence="1">
    <location>
        <begin position="379"/>
        <end position="399"/>
    </location>
</feature>
<feature type="topological domain" description="Cytoplasmic" evidence="1">
    <location>
        <begin position="400"/>
        <end position="406"/>
    </location>
</feature>
<accession>P52067</accession>
<accession>Q2MBU8</accession>
<organism>
    <name type="scientific">Escherichia coli (strain K12)</name>
    <dbReference type="NCBI Taxonomy" id="83333"/>
    <lineage>
        <taxon>Bacteria</taxon>
        <taxon>Pseudomonadati</taxon>
        <taxon>Pseudomonadota</taxon>
        <taxon>Gammaproteobacteria</taxon>
        <taxon>Enterobacterales</taxon>
        <taxon>Enterobacteriaceae</taxon>
        <taxon>Escherichia</taxon>
    </lineage>
</organism>
<name>FSR_ECOLI</name>
<reference key="1">
    <citation type="journal article" date="1996" name="Gene">
        <title>Cloning of a gene from Escherichia coli that confers resistance to fosmidomycin as a consequence of amplification.</title>
        <authorList>
            <person name="Fujisaki S."/>
            <person name="Ohnuma S."/>
            <person name="Horiuchi T."/>
            <person name="Takahashi I."/>
            <person name="Tsukui S."/>
            <person name="Nishimura Y."/>
            <person name="Nishino T."/>
            <person name="Kitabatake M."/>
            <person name="Inokuchi H."/>
        </authorList>
    </citation>
    <scope>NUCLEOTIDE SEQUENCE [GENOMIC DNA]</scope>
    <source>
        <strain>K12 / DH5-alpha</strain>
    </source>
</reference>
<reference key="2">
    <citation type="submission" date="1997-01" db="EMBL/GenBank/DDBJ databases">
        <title>Sequence of minutes 4-25 of Escherichia coli.</title>
        <authorList>
            <person name="Chung E."/>
            <person name="Allen E."/>
            <person name="Araujo R."/>
            <person name="Aparicio A.M."/>
            <person name="Davis K."/>
            <person name="Duncan M."/>
            <person name="Federspiel N."/>
            <person name="Hyman R."/>
            <person name="Kalman S."/>
            <person name="Komp C."/>
            <person name="Kurdi O."/>
            <person name="Lew H."/>
            <person name="Lin D."/>
            <person name="Namath A."/>
            <person name="Oefner P."/>
            <person name="Roberts D."/>
            <person name="Schramm S."/>
            <person name="Davis R.W."/>
        </authorList>
    </citation>
    <scope>NUCLEOTIDE SEQUENCE [LARGE SCALE GENOMIC DNA]</scope>
    <source>
        <strain>K12 / MG1655 / ATCC 47076</strain>
    </source>
</reference>
<reference key="3">
    <citation type="journal article" date="1997" name="Science">
        <title>The complete genome sequence of Escherichia coli K-12.</title>
        <authorList>
            <person name="Blattner F.R."/>
            <person name="Plunkett G. III"/>
            <person name="Bloch C.A."/>
            <person name="Perna N.T."/>
            <person name="Burland V."/>
            <person name="Riley M."/>
            <person name="Collado-Vides J."/>
            <person name="Glasner J.D."/>
            <person name="Rode C.K."/>
            <person name="Mayhew G.F."/>
            <person name="Gregor J."/>
            <person name="Davis N.W."/>
            <person name="Kirkpatrick H.A."/>
            <person name="Goeden M.A."/>
            <person name="Rose D.J."/>
            <person name="Mau B."/>
            <person name="Shao Y."/>
        </authorList>
    </citation>
    <scope>NUCLEOTIDE SEQUENCE [LARGE SCALE GENOMIC DNA]</scope>
    <source>
        <strain>K12 / MG1655 / ATCC 47076</strain>
    </source>
</reference>
<reference key="4">
    <citation type="journal article" date="2006" name="Mol. Syst. Biol.">
        <title>Highly accurate genome sequences of Escherichia coli K-12 strains MG1655 and W3110.</title>
        <authorList>
            <person name="Hayashi K."/>
            <person name="Morooka N."/>
            <person name="Yamamoto Y."/>
            <person name="Fujita K."/>
            <person name="Isono K."/>
            <person name="Choi S."/>
            <person name="Ohtsubo E."/>
            <person name="Baba T."/>
            <person name="Wanner B.L."/>
            <person name="Mori H."/>
            <person name="Horiuchi T."/>
        </authorList>
    </citation>
    <scope>NUCLEOTIDE SEQUENCE [LARGE SCALE GENOMIC DNA]</scope>
    <source>
        <strain>K12 / W3110 / ATCC 27325 / DSM 5911</strain>
    </source>
</reference>
<reference key="5">
    <citation type="journal article" date="2005" name="Science">
        <title>Global topology analysis of the Escherichia coli inner membrane proteome.</title>
        <authorList>
            <person name="Daley D.O."/>
            <person name="Rapp M."/>
            <person name="Granseth E."/>
            <person name="Melen K."/>
            <person name="Drew D."/>
            <person name="von Heijne G."/>
        </authorList>
    </citation>
    <scope>TOPOLOGY [LARGE SCALE ANALYSIS]</scope>
    <source>
        <strain>K12 / MG1655 / ATCC 47076</strain>
    </source>
</reference>
<dbReference type="EMBL" id="D73370">
    <property type="protein sequence ID" value="BAA11120.1"/>
    <property type="molecule type" value="Genomic_DNA"/>
</dbReference>
<dbReference type="EMBL" id="U82664">
    <property type="protein sequence ID" value="AAB40233.1"/>
    <property type="molecule type" value="Genomic_DNA"/>
</dbReference>
<dbReference type="EMBL" id="U00096">
    <property type="protein sequence ID" value="AAC73581.1"/>
    <property type="molecule type" value="Genomic_DNA"/>
</dbReference>
<dbReference type="EMBL" id="AP009048">
    <property type="protein sequence ID" value="BAE76258.1"/>
    <property type="molecule type" value="Genomic_DNA"/>
</dbReference>
<dbReference type="PIR" id="JC5041">
    <property type="entry name" value="JC5041"/>
</dbReference>
<dbReference type="RefSeq" id="NP_415012.1">
    <property type="nucleotide sequence ID" value="NC_000913.3"/>
</dbReference>
<dbReference type="RefSeq" id="WP_001251608.1">
    <property type="nucleotide sequence ID" value="NZ_SSZK01000009.1"/>
</dbReference>
<dbReference type="SMR" id="P52067"/>
<dbReference type="BioGRID" id="4260849">
    <property type="interactions" value="16"/>
</dbReference>
<dbReference type="FunCoup" id="P52067">
    <property type="interactions" value="55"/>
</dbReference>
<dbReference type="STRING" id="511145.b0479"/>
<dbReference type="TCDB" id="2.A.1.35.1">
    <property type="family name" value="the major facilitator superfamily (mfs)"/>
</dbReference>
<dbReference type="PaxDb" id="511145-b0479"/>
<dbReference type="EnsemblBacteria" id="AAC73581">
    <property type="protein sequence ID" value="AAC73581"/>
    <property type="gene ID" value="b0479"/>
</dbReference>
<dbReference type="GeneID" id="75203145"/>
<dbReference type="GeneID" id="945119"/>
<dbReference type="KEGG" id="ecj:JW0468"/>
<dbReference type="KEGG" id="eco:b0479"/>
<dbReference type="KEGG" id="ecoc:C3026_02355"/>
<dbReference type="PATRIC" id="fig|1411691.4.peg.1797"/>
<dbReference type="EchoBASE" id="EB3054"/>
<dbReference type="eggNOG" id="COG2223">
    <property type="taxonomic scope" value="Bacteria"/>
</dbReference>
<dbReference type="HOGENOM" id="CLU_040537_2_0_6"/>
<dbReference type="InParanoid" id="P52067"/>
<dbReference type="OMA" id="YFYMASF"/>
<dbReference type="OrthoDB" id="9770492at2"/>
<dbReference type="PhylomeDB" id="P52067"/>
<dbReference type="BioCyc" id="EcoCyc:FSR-MONOMER"/>
<dbReference type="BioCyc" id="MetaCyc:FSR-MONOMER"/>
<dbReference type="PRO" id="PR:P52067"/>
<dbReference type="Proteomes" id="UP000000625">
    <property type="component" value="Chromosome"/>
</dbReference>
<dbReference type="GO" id="GO:0005886">
    <property type="term" value="C:plasma membrane"/>
    <property type="evidence" value="ECO:0000314"/>
    <property type="project" value="EcoCyc"/>
</dbReference>
<dbReference type="GO" id="GO:0022857">
    <property type="term" value="F:transmembrane transporter activity"/>
    <property type="evidence" value="ECO:0007669"/>
    <property type="project" value="InterPro"/>
</dbReference>
<dbReference type="GO" id="GO:0006974">
    <property type="term" value="P:DNA damage response"/>
    <property type="evidence" value="ECO:0000270"/>
    <property type="project" value="EcoliWiki"/>
</dbReference>
<dbReference type="GO" id="GO:0046677">
    <property type="term" value="P:response to antibiotic"/>
    <property type="evidence" value="ECO:0000315"/>
    <property type="project" value="EcoCyc"/>
</dbReference>
<dbReference type="CDD" id="cd17478">
    <property type="entry name" value="MFS_FsR"/>
    <property type="match status" value="1"/>
</dbReference>
<dbReference type="FunFam" id="1.20.1250.20:FF:000042">
    <property type="entry name" value="Fosmidomycin resistance protein"/>
    <property type="match status" value="1"/>
</dbReference>
<dbReference type="FunFam" id="1.20.1250.20:FF:000054">
    <property type="entry name" value="Fosmidomycin resistance protein"/>
    <property type="match status" value="1"/>
</dbReference>
<dbReference type="Gene3D" id="1.20.1250.20">
    <property type="entry name" value="MFS general substrate transporter like domains"/>
    <property type="match status" value="2"/>
</dbReference>
<dbReference type="InterPro" id="IPR011701">
    <property type="entry name" value="MFS"/>
</dbReference>
<dbReference type="InterPro" id="IPR020846">
    <property type="entry name" value="MFS_dom"/>
</dbReference>
<dbReference type="InterPro" id="IPR036259">
    <property type="entry name" value="MFS_trans_sf"/>
</dbReference>
<dbReference type="PANTHER" id="PTHR43129">
    <property type="entry name" value="FOSMIDOMYCIN RESISTANCE PROTEIN"/>
    <property type="match status" value="1"/>
</dbReference>
<dbReference type="PANTHER" id="PTHR43129:SF1">
    <property type="entry name" value="FOSMIDOMYCIN RESISTANCE PROTEIN"/>
    <property type="match status" value="1"/>
</dbReference>
<dbReference type="Pfam" id="PF07690">
    <property type="entry name" value="MFS_1"/>
    <property type="match status" value="1"/>
</dbReference>
<dbReference type="SUPFAM" id="SSF103473">
    <property type="entry name" value="MFS general substrate transporter"/>
    <property type="match status" value="1"/>
</dbReference>
<dbReference type="PROSITE" id="PS50850">
    <property type="entry name" value="MFS"/>
    <property type="match status" value="1"/>
</dbReference>
<proteinExistence type="evidence at protein level"/>
<protein>
    <recommendedName>
        <fullName>Fosmidomycin resistance protein</fullName>
    </recommendedName>
</protein>
<evidence type="ECO:0000255" key="1"/>
<evidence type="ECO:0000305" key="2"/>
<keyword id="KW-0046">Antibiotic resistance</keyword>
<keyword id="KW-0997">Cell inner membrane</keyword>
<keyword id="KW-1003">Cell membrane</keyword>
<keyword id="KW-0472">Membrane</keyword>
<keyword id="KW-1185">Reference proteome</keyword>
<keyword id="KW-0812">Transmembrane</keyword>
<keyword id="KW-1133">Transmembrane helix</keyword>
<gene>
    <name type="primary">fsr</name>
    <name type="ordered locus">b0479</name>
    <name type="ordered locus">JW0468</name>
</gene>
<sequence>MAMSEQPQPVAGAAASTTKARTSFGILGAISLSHLLNDMIQSLILAIYPLLQSEFSLTFMQIGMITLTFQLASSLLQPVVGYWTDKYPMPWSLPIGMCFTLSGLVLLALAGSFGAVLLAAALVGTGSSVFHPESSRVARMASGGRHGLAQSIFQVGGNFGSSLGPLLAAVIIAPYGKGNVAWFVLAALLAIVVLAQISRWYSAQHRMNKGKPKATIINPLPRNKVVLAVSILLILIFSKYFYMASISSYYTFYLMQKFGLSIQNAQLHLFAFLFAVAAGTVIGGPVGDKIGRKYVIWGSILGVAPFTLILPYASLHWTGVLTVIIGFILASAFSAILVYAQELLPGRIGMVSGLFFGFAFGMGGLGAAVLGLIADHTSIELVYKICAFLPLLGMLTIFLPDNRHKD</sequence>
<comment type="function">
    <text>Confers the resistance against fosmidomycin.</text>
</comment>
<comment type="subcellular location">
    <subcellularLocation>
        <location>Cell inner membrane</location>
        <topology>Multi-pass membrane protein</topology>
    </subcellularLocation>
</comment>
<comment type="similarity">
    <text evidence="2">Belongs to the major facilitator superfamily.</text>
</comment>